<name>HPRK_STAA8</name>
<protein>
    <recommendedName>
        <fullName evidence="1">HPr kinase/phosphorylase</fullName>
        <shortName evidence="1">HPrK/P</shortName>
        <ecNumber evidence="1">2.7.11.-</ecNumber>
        <ecNumber evidence="1">2.7.4.-</ecNumber>
    </recommendedName>
    <alternativeName>
        <fullName evidence="1">HPr(Ser) kinase/phosphorylase</fullName>
    </alternativeName>
</protein>
<keyword id="KW-0067">ATP-binding</keyword>
<keyword id="KW-0119">Carbohydrate metabolism</keyword>
<keyword id="KW-0418">Kinase</keyword>
<keyword id="KW-0460">Magnesium</keyword>
<keyword id="KW-0479">Metal-binding</keyword>
<keyword id="KW-0511">Multifunctional enzyme</keyword>
<keyword id="KW-0547">Nucleotide-binding</keyword>
<keyword id="KW-1185">Reference proteome</keyword>
<keyword id="KW-0723">Serine/threonine-protein kinase</keyword>
<keyword id="KW-0808">Transferase</keyword>
<dbReference type="EC" id="2.7.11.-" evidence="1"/>
<dbReference type="EC" id="2.7.4.-" evidence="1"/>
<dbReference type="EMBL" id="CP000253">
    <property type="protein sequence ID" value="ABD29910.1"/>
    <property type="molecule type" value="Genomic_DNA"/>
</dbReference>
<dbReference type="RefSeq" id="WP_000958224.1">
    <property type="nucleotide sequence ID" value="NZ_LS483365.1"/>
</dbReference>
<dbReference type="RefSeq" id="YP_499338.1">
    <property type="nucleotide sequence ID" value="NC_007795.1"/>
</dbReference>
<dbReference type="SMR" id="Q2G045"/>
<dbReference type="STRING" id="93061.SAOUHSC_00781"/>
<dbReference type="PaxDb" id="1280-SAXN108_0827"/>
<dbReference type="GeneID" id="3919071"/>
<dbReference type="KEGG" id="sao:SAOUHSC_00781"/>
<dbReference type="PATRIC" id="fig|93061.5.peg.702"/>
<dbReference type="eggNOG" id="COG1493">
    <property type="taxonomic scope" value="Bacteria"/>
</dbReference>
<dbReference type="HOGENOM" id="CLU_052030_0_1_9"/>
<dbReference type="OrthoDB" id="9778803at2"/>
<dbReference type="PRO" id="PR:Q2G045"/>
<dbReference type="Proteomes" id="UP000008816">
    <property type="component" value="Chromosome"/>
</dbReference>
<dbReference type="GO" id="GO:0005829">
    <property type="term" value="C:cytosol"/>
    <property type="evidence" value="ECO:0000318"/>
    <property type="project" value="GO_Central"/>
</dbReference>
<dbReference type="GO" id="GO:0005524">
    <property type="term" value="F:ATP binding"/>
    <property type="evidence" value="ECO:0007669"/>
    <property type="project" value="UniProtKB-UniRule"/>
</dbReference>
<dbReference type="GO" id="GO:0000287">
    <property type="term" value="F:magnesium ion binding"/>
    <property type="evidence" value="ECO:0007669"/>
    <property type="project" value="UniProtKB-UniRule"/>
</dbReference>
<dbReference type="GO" id="GO:0000155">
    <property type="term" value="F:phosphorelay sensor kinase activity"/>
    <property type="evidence" value="ECO:0007669"/>
    <property type="project" value="InterPro"/>
</dbReference>
<dbReference type="GO" id="GO:0004674">
    <property type="term" value="F:protein serine/threonine kinase activity"/>
    <property type="evidence" value="ECO:0007669"/>
    <property type="project" value="UniProtKB-KW"/>
</dbReference>
<dbReference type="GO" id="GO:0004712">
    <property type="term" value="F:protein serine/threonine/tyrosine kinase activity"/>
    <property type="evidence" value="ECO:0007669"/>
    <property type="project" value="UniProtKB-UniRule"/>
</dbReference>
<dbReference type="GO" id="GO:0006109">
    <property type="term" value="P:regulation of carbohydrate metabolic process"/>
    <property type="evidence" value="ECO:0007669"/>
    <property type="project" value="UniProtKB-UniRule"/>
</dbReference>
<dbReference type="CDD" id="cd01918">
    <property type="entry name" value="HprK_C"/>
    <property type="match status" value="1"/>
</dbReference>
<dbReference type="FunFam" id="3.40.1390.20:FF:000002">
    <property type="entry name" value="HPr kinase/phosphorylase"/>
    <property type="match status" value="1"/>
</dbReference>
<dbReference type="FunFam" id="3.40.50.300:FF:000174">
    <property type="entry name" value="HPr kinase/phosphorylase"/>
    <property type="match status" value="1"/>
</dbReference>
<dbReference type="Gene3D" id="3.40.1390.20">
    <property type="entry name" value="HprK N-terminal domain-like"/>
    <property type="match status" value="1"/>
</dbReference>
<dbReference type="Gene3D" id="3.40.50.300">
    <property type="entry name" value="P-loop containing nucleotide triphosphate hydrolases"/>
    <property type="match status" value="1"/>
</dbReference>
<dbReference type="HAMAP" id="MF_01249">
    <property type="entry name" value="HPr_kinase"/>
    <property type="match status" value="1"/>
</dbReference>
<dbReference type="InterPro" id="IPR003755">
    <property type="entry name" value="HPr(Ser)_kin/Pase"/>
</dbReference>
<dbReference type="InterPro" id="IPR011104">
    <property type="entry name" value="Hpr_kin/Pase_C"/>
</dbReference>
<dbReference type="InterPro" id="IPR011126">
    <property type="entry name" value="Hpr_kin/Pase_Hpr_N"/>
</dbReference>
<dbReference type="InterPro" id="IPR027417">
    <property type="entry name" value="P-loop_NTPase"/>
</dbReference>
<dbReference type="InterPro" id="IPR028979">
    <property type="entry name" value="Ser_kin/Pase_Hpr-like_N_sf"/>
</dbReference>
<dbReference type="NCBIfam" id="TIGR00679">
    <property type="entry name" value="hpr-ser"/>
    <property type="match status" value="1"/>
</dbReference>
<dbReference type="PANTHER" id="PTHR30305:SF1">
    <property type="entry name" value="HPR KINASE_PHOSPHORYLASE"/>
    <property type="match status" value="1"/>
</dbReference>
<dbReference type="PANTHER" id="PTHR30305">
    <property type="entry name" value="PROTEIN YJDM-RELATED"/>
    <property type="match status" value="1"/>
</dbReference>
<dbReference type="Pfam" id="PF07475">
    <property type="entry name" value="Hpr_kinase_C"/>
    <property type="match status" value="1"/>
</dbReference>
<dbReference type="Pfam" id="PF02603">
    <property type="entry name" value="Hpr_kinase_N"/>
    <property type="match status" value="1"/>
</dbReference>
<dbReference type="SUPFAM" id="SSF75138">
    <property type="entry name" value="HprK N-terminal domain-like"/>
    <property type="match status" value="1"/>
</dbReference>
<dbReference type="SUPFAM" id="SSF53795">
    <property type="entry name" value="PEP carboxykinase-like"/>
    <property type="match status" value="1"/>
</dbReference>
<comment type="function">
    <text evidence="1">Catalyzes the ATP- as well as the pyrophosphate-dependent phosphorylation of a specific serine residue in HPr, a phosphocarrier protein of the phosphoenolpyruvate-dependent sugar phosphotransferase system (PTS). HprK/P also catalyzes the pyrophosphate-producing, inorganic phosphate-dependent dephosphorylation (phosphorolysis) of seryl-phosphorylated HPr (P-Ser-HPr). The two antagonistic activities of HprK/P are regulated by several intracellular metabolites, which change their concentration in response to the absence or presence of rapidly metabolisable carbon sources (glucose, fructose, etc.) in the growth medium. Therefore, by controlling the phosphorylation state of HPr, HPrK/P is a sensor enzyme that plays a major role in the regulation of carbon metabolism and sugar transport: it mediates carbon catabolite repression (CCR), and regulates PTS-catalyzed carbohydrate uptake and inducer exclusion.</text>
</comment>
<comment type="catalytic activity">
    <reaction evidence="1">
        <text>[HPr protein]-L-serine + ATP = [HPr protein]-O-phospho-L-serine + ADP + H(+)</text>
        <dbReference type="Rhea" id="RHEA:46600"/>
        <dbReference type="Rhea" id="RHEA-COMP:11602"/>
        <dbReference type="Rhea" id="RHEA-COMP:11603"/>
        <dbReference type="ChEBI" id="CHEBI:15378"/>
        <dbReference type="ChEBI" id="CHEBI:29999"/>
        <dbReference type="ChEBI" id="CHEBI:30616"/>
        <dbReference type="ChEBI" id="CHEBI:83421"/>
        <dbReference type="ChEBI" id="CHEBI:456216"/>
    </reaction>
</comment>
<comment type="catalytic activity">
    <reaction evidence="1">
        <text>[HPr protein]-O-phospho-L-serine + phosphate + H(+) = [HPr protein]-L-serine + diphosphate</text>
        <dbReference type="Rhea" id="RHEA:46604"/>
        <dbReference type="Rhea" id="RHEA-COMP:11602"/>
        <dbReference type="Rhea" id="RHEA-COMP:11603"/>
        <dbReference type="ChEBI" id="CHEBI:15378"/>
        <dbReference type="ChEBI" id="CHEBI:29999"/>
        <dbReference type="ChEBI" id="CHEBI:33019"/>
        <dbReference type="ChEBI" id="CHEBI:43474"/>
        <dbReference type="ChEBI" id="CHEBI:83421"/>
    </reaction>
</comment>
<comment type="cofactor">
    <cofactor evidence="1">
        <name>Mg(2+)</name>
        <dbReference type="ChEBI" id="CHEBI:18420"/>
    </cofactor>
</comment>
<comment type="subunit">
    <text evidence="1">Homohexamer.</text>
</comment>
<comment type="domain">
    <text evidence="1">The Walker A ATP-binding motif also binds Pi and PPi.</text>
</comment>
<comment type="miscellaneous">
    <text evidence="1">Both phosphorylation and phosphorolysis are carried out by the same active site and suggest a common mechanism for both reactions.</text>
</comment>
<comment type="similarity">
    <text evidence="1">Belongs to the HPrK/P family.</text>
</comment>
<feature type="chain" id="PRO_1000067172" description="HPr kinase/phosphorylase">
    <location>
        <begin position="1"/>
        <end position="310"/>
    </location>
</feature>
<feature type="region of interest" description="Important for the catalytic mechanism of both phosphorylation and dephosphorylation" evidence="1">
    <location>
        <begin position="199"/>
        <end position="208"/>
    </location>
</feature>
<feature type="region of interest" description="Important for the catalytic mechanism of dephosphorylation" evidence="1">
    <location>
        <begin position="262"/>
        <end position="267"/>
    </location>
</feature>
<feature type="active site" evidence="1">
    <location>
        <position position="136"/>
    </location>
</feature>
<feature type="active site" evidence="1">
    <location>
        <position position="157"/>
    </location>
</feature>
<feature type="active site" description="Proton acceptor; for phosphorylation activity. Proton donor; for dephosphorylation activity" evidence="1">
    <location>
        <position position="175"/>
    </location>
</feature>
<feature type="active site" evidence="1">
    <location>
        <position position="241"/>
    </location>
</feature>
<feature type="binding site" evidence="1">
    <location>
        <begin position="151"/>
        <end position="158"/>
    </location>
    <ligand>
        <name>ATP</name>
        <dbReference type="ChEBI" id="CHEBI:30616"/>
    </ligand>
</feature>
<feature type="binding site" evidence="1">
    <location>
        <position position="158"/>
    </location>
    <ligand>
        <name>Mg(2+)</name>
        <dbReference type="ChEBI" id="CHEBI:18420"/>
    </ligand>
</feature>
<feature type="binding site" evidence="1">
    <location>
        <position position="200"/>
    </location>
    <ligand>
        <name>Mg(2+)</name>
        <dbReference type="ChEBI" id="CHEBI:18420"/>
    </ligand>
</feature>
<accession>Q2G045</accession>
<reference key="1">
    <citation type="book" date="2006" name="Gram positive pathogens, 2nd edition">
        <title>The Staphylococcus aureus NCTC 8325 genome.</title>
        <editorList>
            <person name="Fischetti V."/>
            <person name="Novick R."/>
            <person name="Ferretti J."/>
            <person name="Portnoy D."/>
            <person name="Rood J."/>
        </editorList>
        <authorList>
            <person name="Gillaspy A.F."/>
            <person name="Worrell V."/>
            <person name="Orvis J."/>
            <person name="Roe B.A."/>
            <person name="Dyer D.W."/>
            <person name="Iandolo J.J."/>
        </authorList>
    </citation>
    <scope>NUCLEOTIDE SEQUENCE [LARGE SCALE GENOMIC DNA]</scope>
    <source>
        <strain>NCTC 8325 / PS 47</strain>
    </source>
</reference>
<evidence type="ECO:0000255" key="1">
    <source>
        <dbReference type="HAMAP-Rule" id="MF_01249"/>
    </source>
</evidence>
<sequence length="310" mass="34482">MLTTEKLVETLKLDLIAGEEGLSKPIKNADISRPGLEMAGYFSHYASDRIQLLGTTELSFYNLLPDKDRAGRMRKLCRPETPAIIVTRGLQPPEELVEAAKELNTPLIVAKDATTSLMSRLTTFLEHALAKTTSLHGVLVDVYGVGVLITGDSGIGKSETALELVKRGHRLVADDNVEIRQINKDELIGKPPKLIEHLLEIRGLGIINVMTLFGAGSILTEKRIRLNINLENWNKQKLYDRVGLNEETLSILDTEITKKTIPVRPGRNVAVIIEVAAMNYRLNIMGINTAEEFSERLNEEIIKNSHKSEE</sequence>
<organism>
    <name type="scientific">Staphylococcus aureus (strain NCTC 8325 / PS 47)</name>
    <dbReference type="NCBI Taxonomy" id="93061"/>
    <lineage>
        <taxon>Bacteria</taxon>
        <taxon>Bacillati</taxon>
        <taxon>Bacillota</taxon>
        <taxon>Bacilli</taxon>
        <taxon>Bacillales</taxon>
        <taxon>Staphylococcaceae</taxon>
        <taxon>Staphylococcus</taxon>
    </lineage>
</organism>
<proteinExistence type="inferred from homology"/>
<gene>
    <name evidence="1" type="primary">hprK</name>
    <name type="ordered locus">SAOUHSC_00781</name>
</gene>